<organism>
    <name type="scientific">Kluyveromyces lactis (strain ATCC 8585 / CBS 2359 / DSM 70799 / NBRC 1267 / NRRL Y-1140 / WM37)</name>
    <name type="common">Yeast</name>
    <name type="synonym">Candida sphaerica</name>
    <dbReference type="NCBI Taxonomy" id="284590"/>
    <lineage>
        <taxon>Eukaryota</taxon>
        <taxon>Fungi</taxon>
        <taxon>Dikarya</taxon>
        <taxon>Ascomycota</taxon>
        <taxon>Saccharomycotina</taxon>
        <taxon>Saccharomycetes</taxon>
        <taxon>Saccharomycetales</taxon>
        <taxon>Saccharomycetaceae</taxon>
        <taxon>Kluyveromyces</taxon>
    </lineage>
</organism>
<reference key="1">
    <citation type="journal article" date="2004" name="Nature">
        <title>Genome evolution in yeasts.</title>
        <authorList>
            <person name="Dujon B."/>
            <person name="Sherman D."/>
            <person name="Fischer G."/>
            <person name="Durrens P."/>
            <person name="Casaregola S."/>
            <person name="Lafontaine I."/>
            <person name="de Montigny J."/>
            <person name="Marck C."/>
            <person name="Neuveglise C."/>
            <person name="Talla E."/>
            <person name="Goffard N."/>
            <person name="Frangeul L."/>
            <person name="Aigle M."/>
            <person name="Anthouard V."/>
            <person name="Babour A."/>
            <person name="Barbe V."/>
            <person name="Barnay S."/>
            <person name="Blanchin S."/>
            <person name="Beckerich J.-M."/>
            <person name="Beyne E."/>
            <person name="Bleykasten C."/>
            <person name="Boisrame A."/>
            <person name="Boyer J."/>
            <person name="Cattolico L."/>
            <person name="Confanioleri F."/>
            <person name="de Daruvar A."/>
            <person name="Despons L."/>
            <person name="Fabre E."/>
            <person name="Fairhead C."/>
            <person name="Ferry-Dumazet H."/>
            <person name="Groppi A."/>
            <person name="Hantraye F."/>
            <person name="Hennequin C."/>
            <person name="Jauniaux N."/>
            <person name="Joyet P."/>
            <person name="Kachouri R."/>
            <person name="Kerrest A."/>
            <person name="Koszul R."/>
            <person name="Lemaire M."/>
            <person name="Lesur I."/>
            <person name="Ma L."/>
            <person name="Muller H."/>
            <person name="Nicaud J.-M."/>
            <person name="Nikolski M."/>
            <person name="Oztas S."/>
            <person name="Ozier-Kalogeropoulos O."/>
            <person name="Pellenz S."/>
            <person name="Potier S."/>
            <person name="Richard G.-F."/>
            <person name="Straub M.-L."/>
            <person name="Suleau A."/>
            <person name="Swennen D."/>
            <person name="Tekaia F."/>
            <person name="Wesolowski-Louvel M."/>
            <person name="Westhof E."/>
            <person name="Wirth B."/>
            <person name="Zeniou-Meyer M."/>
            <person name="Zivanovic Y."/>
            <person name="Bolotin-Fukuhara M."/>
            <person name="Thierry A."/>
            <person name="Bouchier C."/>
            <person name="Caudron B."/>
            <person name="Scarpelli C."/>
            <person name="Gaillardin C."/>
            <person name="Weissenbach J."/>
            <person name="Wincker P."/>
            <person name="Souciet J.-L."/>
        </authorList>
    </citation>
    <scope>NUCLEOTIDE SEQUENCE [LARGE SCALE GENOMIC DNA]</scope>
    <source>
        <strain>ATCC 8585 / CBS 2359 / DSM 70799 / NBRC 1267 / NRRL Y-1140 / WM37</strain>
    </source>
</reference>
<dbReference type="EMBL" id="CR382126">
    <property type="protein sequence ID" value="CAG98152.1"/>
    <property type="molecule type" value="Genomic_DNA"/>
</dbReference>
<dbReference type="RefSeq" id="XP_455444.1">
    <property type="nucleotide sequence ID" value="XM_455444.1"/>
</dbReference>
<dbReference type="SMR" id="Q6CKU5"/>
<dbReference type="FunCoup" id="Q6CKU5">
    <property type="interactions" value="85"/>
</dbReference>
<dbReference type="STRING" id="284590.Q6CKU5"/>
<dbReference type="PaxDb" id="284590-Q6CKU5"/>
<dbReference type="KEGG" id="kla:KLLA0_F08041g"/>
<dbReference type="eggNOG" id="ENOG502QUN5">
    <property type="taxonomic scope" value="Eukaryota"/>
</dbReference>
<dbReference type="HOGENOM" id="CLU_026505_0_0_1"/>
<dbReference type="InParanoid" id="Q6CKU5"/>
<dbReference type="OMA" id="VPGYRQI"/>
<dbReference type="Proteomes" id="UP000000598">
    <property type="component" value="Chromosome F"/>
</dbReference>
<dbReference type="GO" id="GO:0032865">
    <property type="term" value="C:ERMES complex"/>
    <property type="evidence" value="ECO:0007669"/>
    <property type="project" value="UniProtKB-UniRule"/>
</dbReference>
<dbReference type="GO" id="GO:0001401">
    <property type="term" value="C:SAM complex"/>
    <property type="evidence" value="ECO:0007669"/>
    <property type="project" value="TreeGrafter"/>
</dbReference>
<dbReference type="GO" id="GO:0051654">
    <property type="term" value="P:establishment of mitochondrion localization"/>
    <property type="evidence" value="ECO:0007669"/>
    <property type="project" value="TreeGrafter"/>
</dbReference>
<dbReference type="GO" id="GO:0000002">
    <property type="term" value="P:mitochondrial genome maintenance"/>
    <property type="evidence" value="ECO:0007669"/>
    <property type="project" value="UniProtKB-UniRule"/>
</dbReference>
<dbReference type="GO" id="GO:0070096">
    <property type="term" value="P:mitochondrial outer membrane translocase complex assembly"/>
    <property type="evidence" value="ECO:0007669"/>
    <property type="project" value="UniProtKB-UniRule"/>
</dbReference>
<dbReference type="GO" id="GO:1990456">
    <property type="term" value="P:mitochondrion-endoplasmic reticulum membrane tethering"/>
    <property type="evidence" value="ECO:0007669"/>
    <property type="project" value="UniProtKB-UniRule"/>
</dbReference>
<dbReference type="GO" id="GO:0015914">
    <property type="term" value="P:phospholipid transport"/>
    <property type="evidence" value="ECO:0007669"/>
    <property type="project" value="TreeGrafter"/>
</dbReference>
<dbReference type="GO" id="GO:0045040">
    <property type="term" value="P:protein insertion into mitochondrial outer membrane"/>
    <property type="evidence" value="ECO:0007669"/>
    <property type="project" value="UniProtKB-UniRule"/>
</dbReference>
<dbReference type="HAMAP" id="MF_03102">
    <property type="entry name" value="Mdm10"/>
    <property type="match status" value="1"/>
</dbReference>
<dbReference type="InterPro" id="IPR027539">
    <property type="entry name" value="Mdm10"/>
</dbReference>
<dbReference type="PANTHER" id="PTHR28035">
    <property type="entry name" value="MITOCHONDRIAL DISTRIBUTION AND MORPHOLOGY PROTEIN 10"/>
    <property type="match status" value="1"/>
</dbReference>
<dbReference type="PANTHER" id="PTHR28035:SF1">
    <property type="entry name" value="MITOCHONDRIAL DISTRIBUTION AND MORPHOLOGY PROTEIN 10"/>
    <property type="match status" value="1"/>
</dbReference>
<dbReference type="Pfam" id="PF12519">
    <property type="entry name" value="MDM10"/>
    <property type="match status" value="1"/>
</dbReference>
<name>MDM10_KLULA</name>
<evidence type="ECO:0000255" key="1">
    <source>
        <dbReference type="HAMAP-Rule" id="MF_03102"/>
    </source>
</evidence>
<accession>Q6CKU5</accession>
<keyword id="KW-0472">Membrane</keyword>
<keyword id="KW-0496">Mitochondrion</keyword>
<keyword id="KW-1000">Mitochondrion outer membrane</keyword>
<keyword id="KW-1185">Reference proteome</keyword>
<keyword id="KW-0812">Transmembrane</keyword>
<keyword id="KW-1134">Transmembrane beta strand</keyword>
<proteinExistence type="inferred from homology"/>
<gene>
    <name evidence="1" type="primary">MDM10</name>
    <name type="ordered locus">KLLA0F08041g</name>
</gene>
<comment type="function">
    <text evidence="1">Component of the ERMES/MDM complex, which serves as a molecular tether to connect the endoplasmic reticulum and mitochondria. Components of this complex are involved in the control of mitochondrial shape and protein biogenesis and may function in phospholipid exchange. MDM10 is involved in the late assembly steps of the general translocase of the mitochondrial outer membrane (TOM complex). Functions in the TOM40-specific route of the assembly of outer membrane beta-barrel proteins, including the association of TOM40 with the receptor TOM22 and small TOM proteins. Can associate with the SAM(core) complex as well as the MDM12-MMM1 complex, both involved in late steps of the major beta-barrel assembly pathway, that is responsible for biogenesis of all outer membrane beta-barrel proteins. May act as a switch that shuttles between both complexes and channels precursor proteins into the TOM40-specific pathway. Plays a role in mitochondrial morphology and in the inheritance of mitochondria.</text>
</comment>
<comment type="subunit">
    <text evidence="1">Component of the ER-mitochondria encounter structure (ERMES) or MDM complex, composed of MMM1, MDM10, MDM12 and MDM34. Associates with the mitochondrial outer membrane sorting assembly machinery SAM(core) complex.</text>
</comment>
<comment type="subcellular location">
    <subcellularLocation>
        <location evidence="1">Mitochondrion outer membrane</location>
        <topology evidence="1">Multi-pass membrane protein</topology>
    </subcellularLocation>
    <text evidence="1">The ERMES/MDM complex localizes to a few discrete foci (around 10 per single cell), that represent mitochondria-endoplasmic reticulum junctions. These foci are often found next to mtDNA nucleoids.</text>
</comment>
<comment type="domain">
    <text>Lacks alpha-helical transmembrane segments, suggesting that it resides in the membrane via beta-sheet conformations similar to those predicted for other outer membrane proteins and porin.</text>
</comment>
<comment type="similarity">
    <text evidence="1">Belongs to the MDM10 family.</text>
</comment>
<protein>
    <recommendedName>
        <fullName evidence="1">Mitochondrial distribution and morphology protein 10</fullName>
    </recommendedName>
    <alternativeName>
        <fullName evidence="1">Mitochondrial inheritance component MDM10</fullName>
    </alternativeName>
</protein>
<sequence>MLEYMDYVLRQFEECTSWNKDNSYENIVGTSRNILQFDIPTALKVQVSNRATPYSYNTLELTNNKTINGSLTYLYTNCENLDQFIEGSSSVHLQQMTQSFRYIEPYYHHYKNNSKLEVPKVPELPISLAYGRMFYPSSSLEAMYIRRFPNYYQFILKCSSSKSGSSILTMYLQKNTGINCQELIFSTNEALLGYRFVHNFVSAGSKSNLSLYNNSSLSIGSEIWCALLNLSPGCSTTLRYCSHATNTGKPLIFTLSLNPLYGHVSSTYSIKTHENLTFCTKYDFNIYSIQSNLTLGMELWKNSSSIPVERPSEPVETIEDWPQLSHDKTPMYYHLLTRTENSGASSQRLLKDLNLTFQSSLQKINKERNVIENFNERYSEANFTQVFKVSTSLRDMNLRLLWEGKIRGFLISAGAELTQPPEISTNGLDSLEHQNWSLISPSKFGIQLQYSA</sequence>
<feature type="chain" id="PRO_0000384180" description="Mitochondrial distribution and morphology protein 10">
    <location>
        <begin position="1"/>
        <end position="452"/>
    </location>
</feature>